<organism>
    <name type="scientific">Streptococcus mutans serotype c (strain ATCC 700610 / UA159)</name>
    <dbReference type="NCBI Taxonomy" id="210007"/>
    <lineage>
        <taxon>Bacteria</taxon>
        <taxon>Bacillati</taxon>
        <taxon>Bacillota</taxon>
        <taxon>Bacilli</taxon>
        <taxon>Lactobacillales</taxon>
        <taxon>Streptococcaceae</taxon>
        <taxon>Streptococcus</taxon>
    </lineage>
</organism>
<evidence type="ECO:0000255" key="1">
    <source>
        <dbReference type="HAMAP-Rule" id="MF_00111"/>
    </source>
</evidence>
<gene>
    <name evidence="1" type="primary">murA1</name>
    <name type="ordered locus">SMU_1525</name>
</gene>
<comment type="function">
    <text evidence="1">Cell wall formation. Adds enolpyruvyl to UDP-N-acetylglucosamine.</text>
</comment>
<comment type="catalytic activity">
    <reaction evidence="1">
        <text>phosphoenolpyruvate + UDP-N-acetyl-alpha-D-glucosamine = UDP-N-acetyl-3-O-(1-carboxyvinyl)-alpha-D-glucosamine + phosphate</text>
        <dbReference type="Rhea" id="RHEA:18681"/>
        <dbReference type="ChEBI" id="CHEBI:43474"/>
        <dbReference type="ChEBI" id="CHEBI:57705"/>
        <dbReference type="ChEBI" id="CHEBI:58702"/>
        <dbReference type="ChEBI" id="CHEBI:68483"/>
        <dbReference type="EC" id="2.5.1.7"/>
    </reaction>
</comment>
<comment type="pathway">
    <text evidence="1">Cell wall biogenesis; peptidoglycan biosynthesis.</text>
</comment>
<comment type="subcellular location">
    <subcellularLocation>
        <location evidence="1">Cytoplasm</location>
    </subcellularLocation>
</comment>
<comment type="similarity">
    <text evidence="1">Belongs to the EPSP synthase family. MurA subfamily.</text>
</comment>
<dbReference type="EC" id="2.5.1.7" evidence="1"/>
<dbReference type="EMBL" id="AE014133">
    <property type="protein sequence ID" value="AAN59175.1"/>
    <property type="molecule type" value="Genomic_DNA"/>
</dbReference>
<dbReference type="RefSeq" id="NP_721869.1">
    <property type="nucleotide sequence ID" value="NC_004350.2"/>
</dbReference>
<dbReference type="SMR" id="Q8DT57"/>
<dbReference type="STRING" id="210007.SMU_1525"/>
<dbReference type="KEGG" id="smu:SMU_1525"/>
<dbReference type="PATRIC" id="fig|210007.7.peg.1357"/>
<dbReference type="eggNOG" id="COG0766">
    <property type="taxonomic scope" value="Bacteria"/>
</dbReference>
<dbReference type="HOGENOM" id="CLU_027387_0_0_9"/>
<dbReference type="OrthoDB" id="9803760at2"/>
<dbReference type="PhylomeDB" id="Q8DT57"/>
<dbReference type="UniPathway" id="UPA00219"/>
<dbReference type="Proteomes" id="UP000002512">
    <property type="component" value="Chromosome"/>
</dbReference>
<dbReference type="GO" id="GO:0005737">
    <property type="term" value="C:cytoplasm"/>
    <property type="evidence" value="ECO:0007669"/>
    <property type="project" value="UniProtKB-SubCell"/>
</dbReference>
<dbReference type="GO" id="GO:0008760">
    <property type="term" value="F:UDP-N-acetylglucosamine 1-carboxyvinyltransferase activity"/>
    <property type="evidence" value="ECO:0007669"/>
    <property type="project" value="UniProtKB-UniRule"/>
</dbReference>
<dbReference type="GO" id="GO:0051301">
    <property type="term" value="P:cell division"/>
    <property type="evidence" value="ECO:0007669"/>
    <property type="project" value="UniProtKB-KW"/>
</dbReference>
<dbReference type="GO" id="GO:0071555">
    <property type="term" value="P:cell wall organization"/>
    <property type="evidence" value="ECO:0007669"/>
    <property type="project" value="UniProtKB-KW"/>
</dbReference>
<dbReference type="GO" id="GO:0009252">
    <property type="term" value="P:peptidoglycan biosynthetic process"/>
    <property type="evidence" value="ECO:0007669"/>
    <property type="project" value="UniProtKB-UniRule"/>
</dbReference>
<dbReference type="GO" id="GO:0008360">
    <property type="term" value="P:regulation of cell shape"/>
    <property type="evidence" value="ECO:0007669"/>
    <property type="project" value="UniProtKB-KW"/>
</dbReference>
<dbReference type="GO" id="GO:0019277">
    <property type="term" value="P:UDP-N-acetylgalactosamine biosynthetic process"/>
    <property type="evidence" value="ECO:0007669"/>
    <property type="project" value="InterPro"/>
</dbReference>
<dbReference type="CDD" id="cd01555">
    <property type="entry name" value="UdpNAET"/>
    <property type="match status" value="1"/>
</dbReference>
<dbReference type="FunFam" id="3.65.10.10:FF:000001">
    <property type="entry name" value="UDP-N-acetylglucosamine 1-carboxyvinyltransferase"/>
    <property type="match status" value="1"/>
</dbReference>
<dbReference type="Gene3D" id="3.65.10.10">
    <property type="entry name" value="Enolpyruvate transferase domain"/>
    <property type="match status" value="2"/>
</dbReference>
<dbReference type="HAMAP" id="MF_00111">
    <property type="entry name" value="MurA"/>
    <property type="match status" value="1"/>
</dbReference>
<dbReference type="InterPro" id="IPR001986">
    <property type="entry name" value="Enolpyruvate_Tfrase_dom"/>
</dbReference>
<dbReference type="InterPro" id="IPR036968">
    <property type="entry name" value="Enolpyruvate_Tfrase_sf"/>
</dbReference>
<dbReference type="InterPro" id="IPR050068">
    <property type="entry name" value="MurA_subfamily"/>
</dbReference>
<dbReference type="InterPro" id="IPR013792">
    <property type="entry name" value="RNA3'P_cycl/enolpyr_Trfase_a/b"/>
</dbReference>
<dbReference type="InterPro" id="IPR005750">
    <property type="entry name" value="UDP_GlcNAc_COvinyl_MurA"/>
</dbReference>
<dbReference type="NCBIfam" id="TIGR01072">
    <property type="entry name" value="murA"/>
    <property type="match status" value="1"/>
</dbReference>
<dbReference type="NCBIfam" id="NF006873">
    <property type="entry name" value="PRK09369.1"/>
    <property type="match status" value="1"/>
</dbReference>
<dbReference type="PANTHER" id="PTHR43783">
    <property type="entry name" value="UDP-N-ACETYLGLUCOSAMINE 1-CARBOXYVINYLTRANSFERASE"/>
    <property type="match status" value="1"/>
</dbReference>
<dbReference type="PANTHER" id="PTHR43783:SF1">
    <property type="entry name" value="UDP-N-ACETYLGLUCOSAMINE 1-CARBOXYVINYLTRANSFERASE"/>
    <property type="match status" value="1"/>
</dbReference>
<dbReference type="Pfam" id="PF00275">
    <property type="entry name" value="EPSP_synthase"/>
    <property type="match status" value="1"/>
</dbReference>
<dbReference type="SUPFAM" id="SSF55205">
    <property type="entry name" value="EPT/RTPC-like"/>
    <property type="match status" value="1"/>
</dbReference>
<name>MURA1_STRMU</name>
<accession>Q8DT57</accession>
<reference key="1">
    <citation type="journal article" date="2002" name="Proc. Natl. Acad. Sci. U.S.A.">
        <title>Genome sequence of Streptococcus mutans UA159, a cariogenic dental pathogen.</title>
        <authorList>
            <person name="Ajdic D.J."/>
            <person name="McShan W.M."/>
            <person name="McLaughlin R.E."/>
            <person name="Savic G."/>
            <person name="Chang J."/>
            <person name="Carson M.B."/>
            <person name="Primeaux C."/>
            <person name="Tian R."/>
            <person name="Kenton S."/>
            <person name="Jia H.G."/>
            <person name="Lin S.P."/>
            <person name="Qian Y."/>
            <person name="Li S."/>
            <person name="Zhu H."/>
            <person name="Najar F.Z."/>
            <person name="Lai H."/>
            <person name="White J."/>
            <person name="Roe B.A."/>
            <person name="Ferretti J.J."/>
        </authorList>
    </citation>
    <scope>NUCLEOTIDE SEQUENCE [LARGE SCALE GENOMIC DNA]</scope>
    <source>
        <strain>ATCC 700610 / UA159</strain>
    </source>
</reference>
<sequence length="423" mass="45617">MDRIIIEGGNTQLKGEVVIEGAKNAVLPLLAAAILPTEGQTLLKNVPILSDVFTMNNVVRGLNVAVDFDEERNQILVDATGDILDVAPYEYVSQMRASIVVLGPILARNGHAKVSMPGGCTIGSRPIDLHLKGLEAMGAKIQQTGGDITATADRLKGANIYMDFPSVGATQNLMMAATLADGTTIIENAAREPEIVDLANLLNKMGARVIGAGTETLTIIGVDKMHGTDHSVVQDRIEAGTFMVAAAMTNGNVLVKNAVWEHNRPLISKLREMGVQVTEEERGIRVISDVTKLRPVTVKTMPHPGFPTDMQAQFTALMAVVKGESTMIETVFENRFQHLEEMRRMGLTSEILRDTAMIHGGEQLQGAQVMSTDLRASAALILTGMVADGKTTVGKLNHLDRGYYQFHEKLTKLGATISRVNGE</sequence>
<keyword id="KW-0131">Cell cycle</keyword>
<keyword id="KW-0132">Cell division</keyword>
<keyword id="KW-0133">Cell shape</keyword>
<keyword id="KW-0961">Cell wall biogenesis/degradation</keyword>
<keyword id="KW-0963">Cytoplasm</keyword>
<keyword id="KW-0573">Peptidoglycan synthesis</keyword>
<keyword id="KW-0670">Pyruvate</keyword>
<keyword id="KW-1185">Reference proteome</keyword>
<keyword id="KW-0808">Transferase</keyword>
<protein>
    <recommendedName>
        <fullName evidence="1">UDP-N-acetylglucosamine 1-carboxyvinyltransferase 1</fullName>
        <ecNumber evidence="1">2.5.1.7</ecNumber>
    </recommendedName>
    <alternativeName>
        <fullName evidence="1">Enoylpyruvate transferase 1</fullName>
    </alternativeName>
    <alternativeName>
        <fullName evidence="1">UDP-N-acetylglucosamine enolpyruvyl transferase 1</fullName>
        <shortName evidence="1">EPT 1</shortName>
    </alternativeName>
</protein>
<feature type="chain" id="PRO_0000231278" description="UDP-N-acetylglucosamine 1-carboxyvinyltransferase 1">
    <location>
        <begin position="1"/>
        <end position="423"/>
    </location>
</feature>
<feature type="active site" description="Proton donor" evidence="1">
    <location>
        <position position="120"/>
    </location>
</feature>
<feature type="binding site" evidence="1">
    <location>
        <begin position="23"/>
        <end position="24"/>
    </location>
    <ligand>
        <name>phosphoenolpyruvate</name>
        <dbReference type="ChEBI" id="CHEBI:58702"/>
    </ligand>
</feature>
<feature type="binding site" evidence="1">
    <location>
        <position position="96"/>
    </location>
    <ligand>
        <name>UDP-N-acetyl-alpha-D-glucosamine</name>
        <dbReference type="ChEBI" id="CHEBI:57705"/>
    </ligand>
</feature>
<feature type="binding site" evidence="1">
    <location>
        <begin position="125"/>
        <end position="129"/>
    </location>
    <ligand>
        <name>UDP-N-acetyl-alpha-D-glucosamine</name>
        <dbReference type="ChEBI" id="CHEBI:57705"/>
    </ligand>
</feature>
<feature type="binding site" evidence="1">
    <location>
        <position position="309"/>
    </location>
    <ligand>
        <name>UDP-N-acetyl-alpha-D-glucosamine</name>
        <dbReference type="ChEBI" id="CHEBI:57705"/>
    </ligand>
</feature>
<feature type="binding site" evidence="1">
    <location>
        <position position="331"/>
    </location>
    <ligand>
        <name>UDP-N-acetyl-alpha-D-glucosamine</name>
        <dbReference type="ChEBI" id="CHEBI:57705"/>
    </ligand>
</feature>
<feature type="modified residue" description="2-(S-cysteinyl)pyruvic acid O-phosphothioketal" evidence="1">
    <location>
        <position position="120"/>
    </location>
</feature>
<proteinExistence type="inferred from homology"/>